<sequence length="86" mass="9995">MELKHSISDYTEAEFLEFVKKICRAEGATEEDDNKLVREFERLTEHPDGSDLIYYPRDDREDSPEGIVKEIKEWRAANGKSGFKQG</sequence>
<name>IMM2_ECOLX</name>
<gene>
    <name type="primary">imm</name>
    <name type="synonym">ceiB</name>
</gene>
<accession>P04482</accession>
<feature type="chain" id="PRO_0000218703" description="Colicin-E2 immunity protein">
    <location>
        <begin position="1"/>
        <end position="86"/>
    </location>
</feature>
<feature type="helix" evidence="4">
    <location>
        <begin position="7"/>
        <end position="9"/>
    </location>
</feature>
<feature type="helix" evidence="4">
    <location>
        <begin position="12"/>
        <end position="24"/>
    </location>
</feature>
<feature type="strand" evidence="3">
    <location>
        <begin position="27"/>
        <end position="29"/>
    </location>
</feature>
<feature type="helix" evidence="4">
    <location>
        <begin position="30"/>
        <end position="44"/>
    </location>
</feature>
<feature type="turn" evidence="4">
    <location>
        <begin position="47"/>
        <end position="50"/>
    </location>
</feature>
<feature type="helix" evidence="4">
    <location>
        <begin position="51"/>
        <end position="54"/>
    </location>
</feature>
<feature type="strand" evidence="2">
    <location>
        <begin position="58"/>
        <end position="60"/>
    </location>
</feature>
<feature type="helix" evidence="4">
    <location>
        <begin position="64"/>
        <end position="77"/>
    </location>
</feature>
<reference key="1">
    <citation type="journal article" date="1984" name="Nucleic Acids Res.">
        <title>Comparative nucleotide sequences encoding the immunity proteins and the carboxyl-terminal peptides of colicins E2 and E3.</title>
        <authorList>
            <person name="Lau P.C.K."/>
            <person name="Rowsome R.W."/>
            <person name="Zuker M."/>
            <person name="Visentin L.P."/>
        </authorList>
    </citation>
    <scope>NUCLEOTIDE SEQUENCE [GENOMIC DNA]</scope>
</reference>
<reference key="2">
    <citation type="journal article" date="1985" name="Nucleic Acids Res.">
        <title>Structure and expression of the ColE2-P9 immunity gene.</title>
        <authorList>
            <person name="Masaki H."/>
            <person name="Toba M."/>
            <person name="Ohta T."/>
        </authorList>
    </citation>
    <scope>NUCLEOTIDE SEQUENCE [GENOMIC DNA]</scope>
</reference>
<reference key="3">
    <citation type="journal article" date="1985" name="Mol. Gen. Genet.">
        <title>Molecular characterisation of the colicin E2 operon and identification of its products.</title>
        <authorList>
            <person name="Cole S.T."/>
            <person name="Saint-Joanis B."/>
            <person name="Pugsley A.P."/>
        </authorList>
    </citation>
    <scope>NUCLEOTIDE SEQUENCE [GENOMIC DNA]</scope>
</reference>
<protein>
    <recommendedName>
        <fullName>Colicin-E2 immunity protein</fullName>
    </recommendedName>
    <alternativeName>
        <fullName>ImmE2</fullName>
    </alternativeName>
    <alternativeName>
        <fullName>Microcin-E2 immunity protein</fullName>
    </alternativeName>
</protein>
<comment type="function">
    <text>This protein is able to protect a cell, which harbors the plasmid ColE2 encoding colicin E2, against colicin E2.</text>
</comment>
<comment type="interaction">
    <interactant intactId="EBI-15855054">
        <id>P04482</id>
    </interactant>
    <interactant intactId="EBI-1029888">
        <id>P09883</id>
        <label>col</label>
    </interactant>
    <organismsDiffer>false</organismsDiffer>
    <experiments>4</experiments>
</comment>
<comment type="similarity">
    <text evidence="1">Belongs to the colicins ColE2/ColE8/ColE9 and pyocins S1/S2 family.</text>
</comment>
<proteinExistence type="evidence at protein level"/>
<dbReference type="EMBL" id="X02227">
    <property type="protein sequence ID" value="CAA26146.1"/>
    <property type="molecule type" value="Genomic_DNA"/>
</dbReference>
<dbReference type="EMBL" id="X01163">
    <property type="protein sequence ID" value="CAA25610.1"/>
    <property type="molecule type" value="Genomic_DNA"/>
</dbReference>
<dbReference type="EMBL" id="M29885">
    <property type="protein sequence ID" value="AAA23069.1"/>
    <property type="molecule type" value="Genomic_DNA"/>
</dbReference>
<dbReference type="PIR" id="A03512">
    <property type="entry name" value="IMECE2"/>
</dbReference>
<dbReference type="RefSeq" id="WP_000420693.1">
    <property type="nucleotide sequence ID" value="NZ_WXYV01000007.1"/>
</dbReference>
<dbReference type="RefSeq" id="YP_001966153.1">
    <property type="nucleotide sequence ID" value="NC_010883.1"/>
</dbReference>
<dbReference type="RefSeq" id="YP_002221665.1">
    <property type="nucleotide sequence ID" value="NC_011228.1"/>
</dbReference>
<dbReference type="PDB" id="2NO8">
    <property type="method" value="NMR"/>
    <property type="chains" value="A=1-86"/>
</dbReference>
<dbReference type="PDB" id="2WPT">
    <property type="method" value="X-ray"/>
    <property type="resolution" value="1.78 A"/>
    <property type="chains" value="A=1-86"/>
</dbReference>
<dbReference type="PDB" id="3U43">
    <property type="method" value="X-ray"/>
    <property type="resolution" value="1.72 A"/>
    <property type="chains" value="A=1-86"/>
</dbReference>
<dbReference type="PDBsum" id="2NO8"/>
<dbReference type="PDBsum" id="2WPT"/>
<dbReference type="PDBsum" id="3U43"/>
<dbReference type="BMRB" id="P04482"/>
<dbReference type="SMR" id="P04482"/>
<dbReference type="DIP" id="DIP-59336N"/>
<dbReference type="IntAct" id="P04482">
    <property type="interactions" value="1"/>
</dbReference>
<dbReference type="EvolutionaryTrace" id="P04482"/>
<dbReference type="GO" id="GO:0015643">
    <property type="term" value="F:toxic substance binding"/>
    <property type="evidence" value="ECO:0007669"/>
    <property type="project" value="InterPro"/>
</dbReference>
<dbReference type="GO" id="GO:0030153">
    <property type="term" value="P:bacteriocin immunity"/>
    <property type="evidence" value="ECO:0007669"/>
    <property type="project" value="UniProtKB-KW"/>
</dbReference>
<dbReference type="CDD" id="cd16363">
    <property type="entry name" value="Col_Im_like"/>
    <property type="match status" value="1"/>
</dbReference>
<dbReference type="Gene3D" id="1.10.1200.20">
    <property type="entry name" value="Colicin E immunity protein"/>
    <property type="match status" value="1"/>
</dbReference>
<dbReference type="InterPro" id="IPR035900">
    <property type="entry name" value="Colicin_E_sf"/>
</dbReference>
<dbReference type="InterPro" id="IPR000290">
    <property type="entry name" value="Colicin_pyocin"/>
</dbReference>
<dbReference type="Pfam" id="PF01320">
    <property type="entry name" value="Colicin_Pyocin"/>
    <property type="match status" value="1"/>
</dbReference>
<dbReference type="PRINTS" id="PR01299">
    <property type="entry name" value="PYOCIN"/>
</dbReference>
<dbReference type="SUPFAM" id="SSF47345">
    <property type="entry name" value="Colicin E immunity proteins"/>
    <property type="match status" value="1"/>
</dbReference>
<keyword id="KW-0002">3D-structure</keyword>
<keyword id="KW-0079">Bacteriocin immunity</keyword>
<keyword id="KW-0614">Plasmid</keyword>
<organism>
    <name type="scientific">Escherichia coli</name>
    <dbReference type="NCBI Taxonomy" id="562"/>
    <lineage>
        <taxon>Bacteria</taxon>
        <taxon>Pseudomonadati</taxon>
        <taxon>Pseudomonadota</taxon>
        <taxon>Gammaproteobacteria</taxon>
        <taxon>Enterobacterales</taxon>
        <taxon>Enterobacteriaceae</taxon>
        <taxon>Escherichia</taxon>
    </lineage>
</organism>
<evidence type="ECO:0000305" key="1"/>
<evidence type="ECO:0007829" key="2">
    <source>
        <dbReference type="PDB" id="2NO8"/>
    </source>
</evidence>
<evidence type="ECO:0007829" key="3">
    <source>
        <dbReference type="PDB" id="2WPT"/>
    </source>
</evidence>
<evidence type="ECO:0007829" key="4">
    <source>
        <dbReference type="PDB" id="3U43"/>
    </source>
</evidence>
<geneLocation type="plasmid">
    <name>ColE2-P9</name>
</geneLocation>